<gene>
    <name type="primary">fnr</name>
    <name type="ordered locus">YPO2300</name>
    <name type="ordered locus">y2132</name>
    <name type="ordered locus">YP_2085</name>
</gene>
<accession>Q8ZE82</accession>
<accession>Q0WEM1</accession>
<reference key="1">
    <citation type="journal article" date="2001" name="Nature">
        <title>Genome sequence of Yersinia pestis, the causative agent of plague.</title>
        <authorList>
            <person name="Parkhill J."/>
            <person name="Wren B.W."/>
            <person name="Thomson N.R."/>
            <person name="Titball R.W."/>
            <person name="Holden M.T.G."/>
            <person name="Prentice M.B."/>
            <person name="Sebaihia M."/>
            <person name="James K.D."/>
            <person name="Churcher C.M."/>
            <person name="Mungall K.L."/>
            <person name="Baker S."/>
            <person name="Basham D."/>
            <person name="Bentley S.D."/>
            <person name="Brooks K."/>
            <person name="Cerdeno-Tarraga A.-M."/>
            <person name="Chillingworth T."/>
            <person name="Cronin A."/>
            <person name="Davies R.M."/>
            <person name="Davis P."/>
            <person name="Dougan G."/>
            <person name="Feltwell T."/>
            <person name="Hamlin N."/>
            <person name="Holroyd S."/>
            <person name="Jagels K."/>
            <person name="Karlyshev A.V."/>
            <person name="Leather S."/>
            <person name="Moule S."/>
            <person name="Oyston P.C.F."/>
            <person name="Quail M.A."/>
            <person name="Rutherford K.M."/>
            <person name="Simmonds M."/>
            <person name="Skelton J."/>
            <person name="Stevens K."/>
            <person name="Whitehead S."/>
            <person name="Barrell B.G."/>
        </authorList>
    </citation>
    <scope>NUCLEOTIDE SEQUENCE [LARGE SCALE GENOMIC DNA]</scope>
    <source>
        <strain>CO-92 / Biovar Orientalis</strain>
    </source>
</reference>
<reference key="2">
    <citation type="journal article" date="2002" name="J. Bacteriol.">
        <title>Genome sequence of Yersinia pestis KIM.</title>
        <authorList>
            <person name="Deng W."/>
            <person name="Burland V."/>
            <person name="Plunkett G. III"/>
            <person name="Boutin A."/>
            <person name="Mayhew G.F."/>
            <person name="Liss P."/>
            <person name="Perna N.T."/>
            <person name="Rose D.J."/>
            <person name="Mau B."/>
            <person name="Zhou S."/>
            <person name="Schwartz D.C."/>
            <person name="Fetherston J.D."/>
            <person name="Lindler L.E."/>
            <person name="Brubaker R.R."/>
            <person name="Plano G.V."/>
            <person name="Straley S.C."/>
            <person name="McDonough K.A."/>
            <person name="Nilles M.L."/>
            <person name="Matson J.S."/>
            <person name="Blattner F.R."/>
            <person name="Perry R.D."/>
        </authorList>
    </citation>
    <scope>NUCLEOTIDE SEQUENCE [LARGE SCALE GENOMIC DNA]</scope>
    <source>
        <strain>KIM10+ / Biovar Mediaevalis</strain>
    </source>
</reference>
<reference key="3">
    <citation type="journal article" date="2004" name="DNA Res.">
        <title>Complete genome sequence of Yersinia pestis strain 91001, an isolate avirulent to humans.</title>
        <authorList>
            <person name="Song Y."/>
            <person name="Tong Z."/>
            <person name="Wang J."/>
            <person name="Wang L."/>
            <person name="Guo Z."/>
            <person name="Han Y."/>
            <person name="Zhang J."/>
            <person name="Pei D."/>
            <person name="Zhou D."/>
            <person name="Qin H."/>
            <person name="Pang X."/>
            <person name="Han Y."/>
            <person name="Zhai J."/>
            <person name="Li M."/>
            <person name="Cui B."/>
            <person name="Qi Z."/>
            <person name="Jin L."/>
            <person name="Dai R."/>
            <person name="Chen F."/>
            <person name="Li S."/>
            <person name="Ye C."/>
            <person name="Du Z."/>
            <person name="Lin W."/>
            <person name="Wang J."/>
            <person name="Yu J."/>
            <person name="Yang H."/>
            <person name="Wang J."/>
            <person name="Huang P."/>
            <person name="Yang R."/>
        </authorList>
    </citation>
    <scope>NUCLEOTIDE SEQUENCE [LARGE SCALE GENOMIC DNA]</scope>
    <source>
        <strain>91001 / Biovar Mediaevalis</strain>
    </source>
</reference>
<feature type="chain" id="PRO_0000100171" description="Fumarate and nitrate reduction regulatory protein">
    <location>
        <begin position="1"/>
        <end position="250"/>
    </location>
</feature>
<feature type="domain" description="HTH crp-type" evidence="3">
    <location>
        <begin position="164"/>
        <end position="237"/>
    </location>
</feature>
<feature type="DNA-binding region" description="H-T-H motif" evidence="3">
    <location>
        <begin position="197"/>
        <end position="216"/>
    </location>
</feature>
<feature type="region of interest" description="Essential for the oxygen-regulated activity" evidence="1">
    <location>
        <begin position="20"/>
        <end position="29"/>
    </location>
</feature>
<feature type="region of interest" description="Activating region 2A" evidence="2">
    <location>
        <begin position="47"/>
        <end position="50"/>
    </location>
</feature>
<feature type="region of interest" description="Activating region 3A" evidence="2">
    <location>
        <begin position="60"/>
        <end position="61"/>
    </location>
</feature>
<feature type="region of interest" description="Activating region 1A" evidence="2">
    <location>
        <begin position="71"/>
        <end position="75"/>
    </location>
</feature>
<feature type="region of interest" description="Activating region 3B" evidence="2">
    <location>
        <position position="81"/>
    </location>
</feature>
<feature type="region of interest" description="Activating region 3C" evidence="2">
    <location>
        <begin position="85"/>
        <end position="87"/>
    </location>
</feature>
<feature type="region of interest" description="Activating region 3D" evidence="2">
    <location>
        <position position="112"/>
    </location>
</feature>
<feature type="region of interest" description="Activating region 1B" evidence="2">
    <location>
        <begin position="116"/>
        <end position="121"/>
    </location>
</feature>
<feature type="region of interest" description="Activating region 2B" evidence="2">
    <location>
        <begin position="123"/>
        <end position="124"/>
    </location>
</feature>
<feature type="region of interest" description="Activating region 2C" evidence="2">
    <location>
        <begin position="127"/>
        <end position="128"/>
    </location>
</feature>
<feature type="region of interest" description="Dimerization" evidence="2">
    <location>
        <begin position="140"/>
        <end position="159"/>
    </location>
</feature>
<feature type="region of interest" description="Activating region 1C" evidence="2">
    <location>
        <begin position="181"/>
        <end position="191"/>
    </location>
</feature>
<feature type="binding site" evidence="2">
    <location>
        <position position="20"/>
    </location>
    <ligand>
        <name>[4Fe-4S] cluster</name>
        <dbReference type="ChEBI" id="CHEBI:49883"/>
    </ligand>
</feature>
<feature type="binding site" evidence="2">
    <location>
        <position position="23"/>
    </location>
    <ligand>
        <name>[4Fe-4S] cluster</name>
        <dbReference type="ChEBI" id="CHEBI:49883"/>
    </ligand>
</feature>
<feature type="binding site" evidence="2">
    <location>
        <position position="29"/>
    </location>
    <ligand>
        <name>[4Fe-4S] cluster</name>
        <dbReference type="ChEBI" id="CHEBI:49883"/>
    </ligand>
</feature>
<feature type="binding site" evidence="2">
    <location>
        <position position="122"/>
    </location>
    <ligand>
        <name>[4Fe-4S] cluster</name>
        <dbReference type="ChEBI" id="CHEBI:49883"/>
    </ligand>
</feature>
<name>FNR_YERPE</name>
<organism>
    <name type="scientific">Yersinia pestis</name>
    <dbReference type="NCBI Taxonomy" id="632"/>
    <lineage>
        <taxon>Bacteria</taxon>
        <taxon>Pseudomonadati</taxon>
        <taxon>Pseudomonadota</taxon>
        <taxon>Gammaproteobacteria</taxon>
        <taxon>Enterobacterales</taxon>
        <taxon>Yersiniaceae</taxon>
        <taxon>Yersinia</taxon>
    </lineage>
</organism>
<keyword id="KW-0004">4Fe-4S</keyword>
<keyword id="KW-0010">Activator</keyword>
<keyword id="KW-0963">Cytoplasm</keyword>
<keyword id="KW-0238">DNA-binding</keyword>
<keyword id="KW-0408">Iron</keyword>
<keyword id="KW-0411">Iron-sulfur</keyword>
<keyword id="KW-0479">Metal-binding</keyword>
<keyword id="KW-1185">Reference proteome</keyword>
<keyword id="KW-0678">Repressor</keyword>
<keyword id="KW-0804">Transcription</keyword>
<keyword id="KW-0805">Transcription regulation</keyword>
<sequence length="250" mass="28133">MIPEKRVIRRIQSGGYAIHCQDCSISQLCIPFTLNEHELDQLDNIIERKKPIQKGQALFKAGDELKSLYAIRSGTIKSYTITEEGDEQITGFHLAGDLVGFDAISNLQHPSFAQALETSMVCEIPFDTLDDLSGKMPNLRQQIMRLMSGEIKGDQDMILLLSKKNAEERLAAFIYNLSHRFAQRGFSPREFRLTMTRGDIGNYLGLTVETISRLLGRFQKSNILSVKGKYITIENNEALAQLAGNPKPRL</sequence>
<proteinExistence type="inferred from homology"/>
<evidence type="ECO:0000250" key="1"/>
<evidence type="ECO:0000255" key="2"/>
<evidence type="ECO:0000255" key="3">
    <source>
        <dbReference type="PROSITE-ProRule" id="PRU00387"/>
    </source>
</evidence>
<evidence type="ECO:0000305" key="4"/>
<comment type="function">
    <text evidence="1">Global transcription factor that controls the expression of over 100 target genes in response to anoxia. It facilitates the adaptation to anaerobic growth conditions by regulating the expression of gene products that are involved in anaerobic energy metabolism. When the terminal electron acceptor, O(2), is no longer available, it represses the synthesis of enzymes involved in aerobic respiration and increases the synthesis of enzymes required for anaerobic respiration (By similarity).</text>
</comment>
<comment type="cofactor">
    <cofactor evidence="1">
        <name>[4Fe-4S] cluster</name>
        <dbReference type="ChEBI" id="CHEBI:49883"/>
    </cofactor>
    <text evidence="1">Binds 1 [4Fe-4S] cluster per subunit.</text>
</comment>
<comment type="subunit">
    <text evidence="1">Homodimer.</text>
</comment>
<comment type="subcellular location">
    <subcellularLocation>
        <location evidence="4">Cytoplasm</location>
    </subcellularLocation>
</comment>
<dbReference type="EMBL" id="AL590842">
    <property type="protein sequence ID" value="CAL20928.1"/>
    <property type="molecule type" value="Genomic_DNA"/>
</dbReference>
<dbReference type="EMBL" id="AE009952">
    <property type="protein sequence ID" value="AAM85694.1"/>
    <property type="molecule type" value="Genomic_DNA"/>
</dbReference>
<dbReference type="EMBL" id="AE017042">
    <property type="protein sequence ID" value="AAS62296.1"/>
    <property type="molecule type" value="Genomic_DNA"/>
</dbReference>
<dbReference type="PIR" id="AE0280">
    <property type="entry name" value="AE0280"/>
</dbReference>
<dbReference type="RefSeq" id="WP_002211022.1">
    <property type="nucleotide sequence ID" value="NZ_WUCM01000001.1"/>
</dbReference>
<dbReference type="RefSeq" id="YP_002347267.1">
    <property type="nucleotide sequence ID" value="NC_003143.1"/>
</dbReference>
<dbReference type="SMR" id="Q8ZE82"/>
<dbReference type="STRING" id="214092.YPO2300"/>
<dbReference type="PaxDb" id="214092-YPO2300"/>
<dbReference type="DNASU" id="1147079"/>
<dbReference type="EnsemblBacteria" id="AAS62296">
    <property type="protein sequence ID" value="AAS62296"/>
    <property type="gene ID" value="YP_2085"/>
</dbReference>
<dbReference type="KEGG" id="ype:YPO2300"/>
<dbReference type="KEGG" id="ypk:y2132"/>
<dbReference type="KEGG" id="ypm:YP_2085"/>
<dbReference type="PATRIC" id="fig|214092.21.peg.2702"/>
<dbReference type="eggNOG" id="COG0664">
    <property type="taxonomic scope" value="Bacteria"/>
</dbReference>
<dbReference type="HOGENOM" id="CLU_075053_0_2_6"/>
<dbReference type="OMA" id="SICRIHK"/>
<dbReference type="OrthoDB" id="7643467at2"/>
<dbReference type="Proteomes" id="UP000000815">
    <property type="component" value="Chromosome"/>
</dbReference>
<dbReference type="Proteomes" id="UP000001019">
    <property type="component" value="Chromosome"/>
</dbReference>
<dbReference type="Proteomes" id="UP000002490">
    <property type="component" value="Chromosome"/>
</dbReference>
<dbReference type="GO" id="GO:0005829">
    <property type="term" value="C:cytosol"/>
    <property type="evidence" value="ECO:0000318"/>
    <property type="project" value="GO_Central"/>
</dbReference>
<dbReference type="GO" id="GO:0051539">
    <property type="term" value="F:4 iron, 4 sulfur cluster binding"/>
    <property type="evidence" value="ECO:0007669"/>
    <property type="project" value="UniProtKB-KW"/>
</dbReference>
<dbReference type="GO" id="GO:0003677">
    <property type="term" value="F:DNA binding"/>
    <property type="evidence" value="ECO:0007669"/>
    <property type="project" value="UniProtKB-KW"/>
</dbReference>
<dbReference type="GO" id="GO:0003700">
    <property type="term" value="F:DNA-binding transcription factor activity"/>
    <property type="evidence" value="ECO:0000318"/>
    <property type="project" value="GO_Central"/>
</dbReference>
<dbReference type="GO" id="GO:0046872">
    <property type="term" value="F:metal ion binding"/>
    <property type="evidence" value="ECO:0007669"/>
    <property type="project" value="UniProtKB-KW"/>
</dbReference>
<dbReference type="CDD" id="cd00038">
    <property type="entry name" value="CAP_ED"/>
    <property type="match status" value="1"/>
</dbReference>
<dbReference type="CDD" id="cd00092">
    <property type="entry name" value="HTH_CRP"/>
    <property type="match status" value="1"/>
</dbReference>
<dbReference type="FunFam" id="1.10.10.10:FF:000028">
    <property type="entry name" value="Fumarate/nitrate reduction transcriptional regulator Fnr"/>
    <property type="match status" value="1"/>
</dbReference>
<dbReference type="FunFam" id="2.60.120.10:FF:000004">
    <property type="entry name" value="Fumarate/nitrate reduction transcriptional regulator Fnr"/>
    <property type="match status" value="1"/>
</dbReference>
<dbReference type="Gene3D" id="2.60.120.10">
    <property type="entry name" value="Jelly Rolls"/>
    <property type="match status" value="1"/>
</dbReference>
<dbReference type="Gene3D" id="1.10.10.10">
    <property type="entry name" value="Winged helix-like DNA-binding domain superfamily/Winged helix DNA-binding domain"/>
    <property type="match status" value="1"/>
</dbReference>
<dbReference type="InterPro" id="IPR000595">
    <property type="entry name" value="cNMP-bd_dom"/>
</dbReference>
<dbReference type="InterPro" id="IPR018490">
    <property type="entry name" value="cNMP-bd_dom_sf"/>
</dbReference>
<dbReference type="InterPro" id="IPR050397">
    <property type="entry name" value="Env_Response_Regulators"/>
</dbReference>
<dbReference type="InterPro" id="IPR012318">
    <property type="entry name" value="HTH_CRP"/>
</dbReference>
<dbReference type="InterPro" id="IPR014710">
    <property type="entry name" value="RmlC-like_jellyroll"/>
</dbReference>
<dbReference type="InterPro" id="IPR018335">
    <property type="entry name" value="Tscrpt_reg_HTH_Crp-type_CS"/>
</dbReference>
<dbReference type="InterPro" id="IPR036388">
    <property type="entry name" value="WH-like_DNA-bd_sf"/>
</dbReference>
<dbReference type="InterPro" id="IPR036390">
    <property type="entry name" value="WH_DNA-bd_sf"/>
</dbReference>
<dbReference type="NCBIfam" id="NF008365">
    <property type="entry name" value="PRK11161.1"/>
    <property type="match status" value="1"/>
</dbReference>
<dbReference type="PANTHER" id="PTHR24567">
    <property type="entry name" value="CRP FAMILY TRANSCRIPTIONAL REGULATORY PROTEIN"/>
    <property type="match status" value="1"/>
</dbReference>
<dbReference type="PANTHER" id="PTHR24567:SF75">
    <property type="entry name" value="FUMARATE AND NITRATE REDUCTION REGULATORY PROTEIN"/>
    <property type="match status" value="1"/>
</dbReference>
<dbReference type="Pfam" id="PF00027">
    <property type="entry name" value="cNMP_binding"/>
    <property type="match status" value="1"/>
</dbReference>
<dbReference type="Pfam" id="PF13545">
    <property type="entry name" value="HTH_Crp_2"/>
    <property type="match status" value="1"/>
</dbReference>
<dbReference type="PRINTS" id="PR00034">
    <property type="entry name" value="HTHCRP"/>
</dbReference>
<dbReference type="SMART" id="SM00100">
    <property type="entry name" value="cNMP"/>
    <property type="match status" value="1"/>
</dbReference>
<dbReference type="SMART" id="SM00419">
    <property type="entry name" value="HTH_CRP"/>
    <property type="match status" value="1"/>
</dbReference>
<dbReference type="SUPFAM" id="SSF51206">
    <property type="entry name" value="cAMP-binding domain-like"/>
    <property type="match status" value="1"/>
</dbReference>
<dbReference type="SUPFAM" id="SSF46785">
    <property type="entry name" value="Winged helix' DNA-binding domain"/>
    <property type="match status" value="1"/>
</dbReference>
<dbReference type="PROSITE" id="PS50042">
    <property type="entry name" value="CNMP_BINDING_3"/>
    <property type="match status" value="1"/>
</dbReference>
<dbReference type="PROSITE" id="PS00042">
    <property type="entry name" value="HTH_CRP_1"/>
    <property type="match status" value="1"/>
</dbReference>
<dbReference type="PROSITE" id="PS51063">
    <property type="entry name" value="HTH_CRP_2"/>
    <property type="match status" value="1"/>
</dbReference>
<protein>
    <recommendedName>
        <fullName>Fumarate and nitrate reduction regulatory protein</fullName>
    </recommendedName>
</protein>